<comment type="function">
    <text evidence="1">Catalyzes the methylation of C-1 in cobalt-precorrin-5B to form cobalt-precorrin-6A.</text>
</comment>
<comment type="catalytic activity">
    <reaction evidence="1">
        <text>Co-precorrin-5B + S-adenosyl-L-methionine = Co-precorrin-6A + S-adenosyl-L-homocysteine</text>
        <dbReference type="Rhea" id="RHEA:26285"/>
        <dbReference type="ChEBI" id="CHEBI:57856"/>
        <dbReference type="ChEBI" id="CHEBI:59789"/>
        <dbReference type="ChEBI" id="CHEBI:60063"/>
        <dbReference type="ChEBI" id="CHEBI:60064"/>
        <dbReference type="EC" id="2.1.1.195"/>
    </reaction>
</comment>
<comment type="pathway">
    <text evidence="1">Cofactor biosynthesis; adenosylcobalamin biosynthesis; cob(II)yrinate a,c-diamide from sirohydrochlorin (anaerobic route): step 6/10.</text>
</comment>
<comment type="similarity">
    <text evidence="1">Belongs to the CbiD family.</text>
</comment>
<evidence type="ECO:0000255" key="1">
    <source>
        <dbReference type="HAMAP-Rule" id="MF_00787"/>
    </source>
</evidence>
<organism>
    <name type="scientific">Marinomonas sp. (strain MWYL1)</name>
    <dbReference type="NCBI Taxonomy" id="400668"/>
    <lineage>
        <taxon>Bacteria</taxon>
        <taxon>Pseudomonadati</taxon>
        <taxon>Pseudomonadota</taxon>
        <taxon>Gammaproteobacteria</taxon>
        <taxon>Oceanospirillales</taxon>
        <taxon>Oceanospirillaceae</taxon>
        <taxon>Marinomonas</taxon>
    </lineage>
</organism>
<gene>
    <name evidence="1" type="primary">cbiD</name>
    <name type="ordered locus">Mmwyl1_3378</name>
</gene>
<keyword id="KW-0169">Cobalamin biosynthesis</keyword>
<keyword id="KW-0489">Methyltransferase</keyword>
<keyword id="KW-0949">S-adenosyl-L-methionine</keyword>
<keyword id="KW-0808">Transferase</keyword>
<feature type="chain" id="PRO_1000083592" description="Cobalt-precorrin-5B C(1)-methyltransferase">
    <location>
        <begin position="1"/>
        <end position="384"/>
    </location>
</feature>
<dbReference type="EC" id="2.1.1.195" evidence="1"/>
<dbReference type="EMBL" id="CP000749">
    <property type="protein sequence ID" value="ABR72281.1"/>
    <property type="molecule type" value="Genomic_DNA"/>
</dbReference>
<dbReference type="SMR" id="A6W0Q2"/>
<dbReference type="STRING" id="400668.Mmwyl1_3378"/>
<dbReference type="KEGG" id="mmw:Mmwyl1_3378"/>
<dbReference type="eggNOG" id="COG1903">
    <property type="taxonomic scope" value="Bacteria"/>
</dbReference>
<dbReference type="HOGENOM" id="CLU_041273_0_0_6"/>
<dbReference type="OrthoDB" id="6439987at2"/>
<dbReference type="UniPathway" id="UPA00148">
    <property type="reaction ID" value="UER00227"/>
</dbReference>
<dbReference type="GO" id="GO:0043780">
    <property type="term" value="F:cobalt-precorrin-5B C1-methyltransferase activity"/>
    <property type="evidence" value="ECO:0007669"/>
    <property type="project" value="RHEA"/>
</dbReference>
<dbReference type="GO" id="GO:0019251">
    <property type="term" value="P:anaerobic cobalamin biosynthetic process"/>
    <property type="evidence" value="ECO:0007669"/>
    <property type="project" value="UniProtKB-UniRule"/>
</dbReference>
<dbReference type="GO" id="GO:0032259">
    <property type="term" value="P:methylation"/>
    <property type="evidence" value="ECO:0007669"/>
    <property type="project" value="UniProtKB-KW"/>
</dbReference>
<dbReference type="Gene3D" id="3.30.2110.10">
    <property type="entry name" value="CbiD-like"/>
    <property type="match status" value="1"/>
</dbReference>
<dbReference type="HAMAP" id="MF_00787">
    <property type="entry name" value="CbiD"/>
    <property type="match status" value="1"/>
</dbReference>
<dbReference type="InterPro" id="IPR002748">
    <property type="entry name" value="CbiD"/>
</dbReference>
<dbReference type="InterPro" id="IPR036074">
    <property type="entry name" value="CbiD_sf"/>
</dbReference>
<dbReference type="NCBIfam" id="TIGR00312">
    <property type="entry name" value="cbiD"/>
    <property type="match status" value="1"/>
</dbReference>
<dbReference type="NCBIfam" id="NF000849">
    <property type="entry name" value="PRK00075.1-1"/>
    <property type="match status" value="1"/>
</dbReference>
<dbReference type="PANTHER" id="PTHR35863">
    <property type="entry name" value="COBALT-PRECORRIN-5B C(1)-METHYLTRANSFERASE"/>
    <property type="match status" value="1"/>
</dbReference>
<dbReference type="PANTHER" id="PTHR35863:SF1">
    <property type="entry name" value="COBALT-PRECORRIN-5B C(1)-METHYLTRANSFERASE"/>
    <property type="match status" value="1"/>
</dbReference>
<dbReference type="Pfam" id="PF01888">
    <property type="entry name" value="CbiD"/>
    <property type="match status" value="1"/>
</dbReference>
<dbReference type="PIRSF" id="PIRSF026782">
    <property type="entry name" value="CbiD"/>
    <property type="match status" value="1"/>
</dbReference>
<dbReference type="SUPFAM" id="SSF111342">
    <property type="entry name" value="CbiD-like"/>
    <property type="match status" value="1"/>
</dbReference>
<reference key="1">
    <citation type="submission" date="2007-06" db="EMBL/GenBank/DDBJ databases">
        <title>Complete sequence of Marinomonas sp. MWYL1.</title>
        <authorList>
            <consortium name="US DOE Joint Genome Institute"/>
            <person name="Copeland A."/>
            <person name="Lucas S."/>
            <person name="Lapidus A."/>
            <person name="Barry K."/>
            <person name="Glavina del Rio T."/>
            <person name="Dalin E."/>
            <person name="Tice H."/>
            <person name="Pitluck S."/>
            <person name="Kiss H."/>
            <person name="Brettin T."/>
            <person name="Bruce D."/>
            <person name="Detter J.C."/>
            <person name="Han C."/>
            <person name="Schmutz J."/>
            <person name="Larimer F."/>
            <person name="Land M."/>
            <person name="Hauser L."/>
            <person name="Kyrpides N."/>
            <person name="Kim E."/>
            <person name="Johnston A.W.B."/>
            <person name="Todd J.D."/>
            <person name="Rogers R."/>
            <person name="Wexler M."/>
            <person name="Bond P.L."/>
            <person name="Li Y."/>
            <person name="Richardson P."/>
        </authorList>
    </citation>
    <scope>NUCLEOTIDE SEQUENCE [LARGE SCALE GENOMIC DNA]</scope>
    <source>
        <strain>MWYL1</strain>
    </source>
</reference>
<protein>
    <recommendedName>
        <fullName evidence="1">Cobalt-precorrin-5B C(1)-methyltransferase</fullName>
        <ecNumber evidence="1">2.1.1.195</ecNumber>
    </recommendedName>
    <alternativeName>
        <fullName evidence="1">Cobalt-precorrin-6A synthase</fullName>
    </alternativeName>
</protein>
<name>CBID_MARMS</name>
<sequence length="384" mass="40552">MWPESAESPAPLRTGLTTGTCATACCVAAAQALFADQQAASVSVTLPKGKVVDLPIIEYQTIDAGMKTSTIKDAGDDPDATHGATLFVELRLSPEQGVRFRAAQGVGIVTRTGLLLDVGEPAINPVPRKMMTEHLKGFAQTYHYQGGFDVSVGVINGEQIAQKTMNPRLGILGGLSILGTTGIVRPFSCAAYIASIHQGIDVARANGLTHIAATTGNASEDAIKSHYQLDDMALIEMGDFVGAVLKHIKKVEQADFAKLNSSTQLQTLSICGGFGKISKLAQHHMDLNSRASSIDLGALAKLAASLGADNALQERMTKANTSVEALSFAISDGLPLADAICQQALDFARQYIPAHIALEVWAIDRKGQFVGKALDADNSKRDEP</sequence>
<proteinExistence type="inferred from homology"/>
<accession>A6W0Q2</accession>